<sequence length="162" mass="18517">MNKIAIYPGTFDPITNGHVDLVERALNIFDEIVVAVSTAYGKNTLFDIRIREQMIKEVFKDNQRVKVVSFQGLLVDTAVKHNACAIVRGLRAVSDFDYEFQMSSMNNKLNSDIQTIFLTPSEKFSCISSTLVRAVAIHNYKRVDEFVPECVFREIKLKYSKE</sequence>
<reference key="1">
    <citation type="journal article" date="2005" name="Nat. Genet.">
        <title>The complete genome sequence of Francisella tularensis, the causative agent of tularemia.</title>
        <authorList>
            <person name="Larsson P."/>
            <person name="Oyston P.C.F."/>
            <person name="Chain P."/>
            <person name="Chu M.C."/>
            <person name="Duffield M."/>
            <person name="Fuxelius H.-H."/>
            <person name="Garcia E."/>
            <person name="Haelltorp G."/>
            <person name="Johansson D."/>
            <person name="Isherwood K.E."/>
            <person name="Karp P.D."/>
            <person name="Larsson E."/>
            <person name="Liu Y."/>
            <person name="Michell S."/>
            <person name="Prior J."/>
            <person name="Prior R."/>
            <person name="Malfatti S."/>
            <person name="Sjoestedt A."/>
            <person name="Svensson K."/>
            <person name="Thompson N."/>
            <person name="Vergez L."/>
            <person name="Wagg J.K."/>
            <person name="Wren B.W."/>
            <person name="Lindler L.E."/>
            <person name="Andersson S.G.E."/>
            <person name="Forsman M."/>
            <person name="Titball R.W."/>
        </authorList>
    </citation>
    <scope>NUCLEOTIDE SEQUENCE [LARGE SCALE GENOMIC DNA]</scope>
    <source>
        <strain>SCHU S4 / Schu 4</strain>
    </source>
</reference>
<dbReference type="EC" id="2.7.7.3" evidence="1"/>
<dbReference type="EMBL" id="AJ749949">
    <property type="protein sequence ID" value="CAG45214.1"/>
    <property type="molecule type" value="Genomic_DNA"/>
</dbReference>
<dbReference type="RefSeq" id="WP_003016535.1">
    <property type="nucleotide sequence ID" value="NZ_CP010290.1"/>
</dbReference>
<dbReference type="RefSeq" id="YP_169605.1">
    <property type="nucleotide sequence ID" value="NC_006570.2"/>
</dbReference>
<dbReference type="SMR" id="Q5NH87"/>
<dbReference type="STRING" id="177416.FTT_0581"/>
<dbReference type="DNASU" id="3192516"/>
<dbReference type="EnsemblBacteria" id="CAG45214">
    <property type="protein sequence ID" value="CAG45214"/>
    <property type="gene ID" value="FTT_0581"/>
</dbReference>
<dbReference type="KEGG" id="ftu:FTT_0581"/>
<dbReference type="eggNOG" id="COG0669">
    <property type="taxonomic scope" value="Bacteria"/>
</dbReference>
<dbReference type="OrthoDB" id="9806661at2"/>
<dbReference type="UniPathway" id="UPA00241">
    <property type="reaction ID" value="UER00355"/>
</dbReference>
<dbReference type="Proteomes" id="UP000001174">
    <property type="component" value="Chromosome"/>
</dbReference>
<dbReference type="GO" id="GO:0005737">
    <property type="term" value="C:cytoplasm"/>
    <property type="evidence" value="ECO:0007669"/>
    <property type="project" value="UniProtKB-SubCell"/>
</dbReference>
<dbReference type="GO" id="GO:0005524">
    <property type="term" value="F:ATP binding"/>
    <property type="evidence" value="ECO:0007669"/>
    <property type="project" value="UniProtKB-KW"/>
</dbReference>
<dbReference type="GO" id="GO:0004595">
    <property type="term" value="F:pantetheine-phosphate adenylyltransferase activity"/>
    <property type="evidence" value="ECO:0007669"/>
    <property type="project" value="UniProtKB-UniRule"/>
</dbReference>
<dbReference type="GO" id="GO:0015937">
    <property type="term" value="P:coenzyme A biosynthetic process"/>
    <property type="evidence" value="ECO:0007669"/>
    <property type="project" value="UniProtKB-UniRule"/>
</dbReference>
<dbReference type="CDD" id="cd02163">
    <property type="entry name" value="PPAT"/>
    <property type="match status" value="1"/>
</dbReference>
<dbReference type="Gene3D" id="3.40.50.620">
    <property type="entry name" value="HUPs"/>
    <property type="match status" value="1"/>
</dbReference>
<dbReference type="HAMAP" id="MF_00151">
    <property type="entry name" value="PPAT_bact"/>
    <property type="match status" value="1"/>
</dbReference>
<dbReference type="InterPro" id="IPR004821">
    <property type="entry name" value="Cyt_trans-like"/>
</dbReference>
<dbReference type="InterPro" id="IPR001980">
    <property type="entry name" value="PPAT"/>
</dbReference>
<dbReference type="InterPro" id="IPR014729">
    <property type="entry name" value="Rossmann-like_a/b/a_fold"/>
</dbReference>
<dbReference type="NCBIfam" id="TIGR01510">
    <property type="entry name" value="coaD_prev_kdtB"/>
    <property type="match status" value="1"/>
</dbReference>
<dbReference type="NCBIfam" id="TIGR00125">
    <property type="entry name" value="cyt_tran_rel"/>
    <property type="match status" value="1"/>
</dbReference>
<dbReference type="PANTHER" id="PTHR21342">
    <property type="entry name" value="PHOSPHOPANTETHEINE ADENYLYLTRANSFERASE"/>
    <property type="match status" value="1"/>
</dbReference>
<dbReference type="PANTHER" id="PTHR21342:SF1">
    <property type="entry name" value="PHOSPHOPANTETHEINE ADENYLYLTRANSFERASE"/>
    <property type="match status" value="1"/>
</dbReference>
<dbReference type="Pfam" id="PF01467">
    <property type="entry name" value="CTP_transf_like"/>
    <property type="match status" value="1"/>
</dbReference>
<dbReference type="PRINTS" id="PR01020">
    <property type="entry name" value="LPSBIOSNTHSS"/>
</dbReference>
<dbReference type="SUPFAM" id="SSF52374">
    <property type="entry name" value="Nucleotidylyl transferase"/>
    <property type="match status" value="1"/>
</dbReference>
<gene>
    <name evidence="1" type="primary">coaD</name>
    <name type="ordered locus">FTT_0581</name>
</gene>
<protein>
    <recommendedName>
        <fullName evidence="1">Phosphopantetheine adenylyltransferase</fullName>
        <ecNumber evidence="1">2.7.7.3</ecNumber>
    </recommendedName>
    <alternativeName>
        <fullName evidence="1">Dephospho-CoA pyrophosphorylase</fullName>
    </alternativeName>
    <alternativeName>
        <fullName evidence="1">Pantetheine-phosphate adenylyltransferase</fullName>
        <shortName evidence="1">PPAT</shortName>
    </alternativeName>
</protein>
<organism>
    <name type="scientific">Francisella tularensis subsp. tularensis (strain SCHU S4 / Schu 4)</name>
    <dbReference type="NCBI Taxonomy" id="177416"/>
    <lineage>
        <taxon>Bacteria</taxon>
        <taxon>Pseudomonadati</taxon>
        <taxon>Pseudomonadota</taxon>
        <taxon>Gammaproteobacteria</taxon>
        <taxon>Thiotrichales</taxon>
        <taxon>Francisellaceae</taxon>
        <taxon>Francisella</taxon>
    </lineage>
</organism>
<keyword id="KW-0067">ATP-binding</keyword>
<keyword id="KW-0173">Coenzyme A biosynthesis</keyword>
<keyword id="KW-0963">Cytoplasm</keyword>
<keyword id="KW-0460">Magnesium</keyword>
<keyword id="KW-0547">Nucleotide-binding</keyword>
<keyword id="KW-0548">Nucleotidyltransferase</keyword>
<keyword id="KW-1185">Reference proteome</keyword>
<keyword id="KW-0808">Transferase</keyword>
<evidence type="ECO:0000255" key="1">
    <source>
        <dbReference type="HAMAP-Rule" id="MF_00151"/>
    </source>
</evidence>
<name>COAD_FRATT</name>
<feature type="chain" id="PRO_0000156209" description="Phosphopantetheine adenylyltransferase">
    <location>
        <begin position="1"/>
        <end position="162"/>
    </location>
</feature>
<feature type="binding site" evidence="1">
    <location>
        <begin position="10"/>
        <end position="11"/>
    </location>
    <ligand>
        <name>ATP</name>
        <dbReference type="ChEBI" id="CHEBI:30616"/>
    </ligand>
</feature>
<feature type="binding site" evidence="1">
    <location>
        <position position="10"/>
    </location>
    <ligand>
        <name>substrate</name>
    </ligand>
</feature>
<feature type="binding site" evidence="1">
    <location>
        <position position="18"/>
    </location>
    <ligand>
        <name>ATP</name>
        <dbReference type="ChEBI" id="CHEBI:30616"/>
    </ligand>
</feature>
<feature type="binding site" evidence="1">
    <location>
        <position position="42"/>
    </location>
    <ligand>
        <name>substrate</name>
    </ligand>
</feature>
<feature type="binding site" evidence="1">
    <location>
        <position position="74"/>
    </location>
    <ligand>
        <name>substrate</name>
    </ligand>
</feature>
<feature type="binding site" evidence="1">
    <location>
        <position position="88"/>
    </location>
    <ligand>
        <name>substrate</name>
    </ligand>
</feature>
<feature type="binding site" evidence="1">
    <location>
        <begin position="89"/>
        <end position="91"/>
    </location>
    <ligand>
        <name>ATP</name>
        <dbReference type="ChEBI" id="CHEBI:30616"/>
    </ligand>
</feature>
<feature type="binding site" evidence="1">
    <location>
        <position position="99"/>
    </location>
    <ligand>
        <name>ATP</name>
        <dbReference type="ChEBI" id="CHEBI:30616"/>
    </ligand>
</feature>
<feature type="binding site" evidence="1">
    <location>
        <begin position="124"/>
        <end position="130"/>
    </location>
    <ligand>
        <name>ATP</name>
        <dbReference type="ChEBI" id="CHEBI:30616"/>
    </ligand>
</feature>
<feature type="site" description="Transition state stabilizer" evidence="1">
    <location>
        <position position="18"/>
    </location>
</feature>
<proteinExistence type="inferred from homology"/>
<comment type="function">
    <text evidence="1">Reversibly transfers an adenylyl group from ATP to 4'-phosphopantetheine, yielding dephospho-CoA (dPCoA) and pyrophosphate.</text>
</comment>
<comment type="catalytic activity">
    <reaction evidence="1">
        <text>(R)-4'-phosphopantetheine + ATP + H(+) = 3'-dephospho-CoA + diphosphate</text>
        <dbReference type="Rhea" id="RHEA:19801"/>
        <dbReference type="ChEBI" id="CHEBI:15378"/>
        <dbReference type="ChEBI" id="CHEBI:30616"/>
        <dbReference type="ChEBI" id="CHEBI:33019"/>
        <dbReference type="ChEBI" id="CHEBI:57328"/>
        <dbReference type="ChEBI" id="CHEBI:61723"/>
        <dbReference type="EC" id="2.7.7.3"/>
    </reaction>
</comment>
<comment type="cofactor">
    <cofactor evidence="1">
        <name>Mg(2+)</name>
        <dbReference type="ChEBI" id="CHEBI:18420"/>
    </cofactor>
</comment>
<comment type="pathway">
    <text evidence="1">Cofactor biosynthesis; coenzyme A biosynthesis; CoA from (R)-pantothenate: step 4/5.</text>
</comment>
<comment type="subunit">
    <text evidence="1">Homohexamer.</text>
</comment>
<comment type="subcellular location">
    <subcellularLocation>
        <location evidence="1">Cytoplasm</location>
    </subcellularLocation>
</comment>
<comment type="similarity">
    <text evidence="1">Belongs to the bacterial CoaD family.</text>
</comment>
<accession>Q5NH87</accession>